<dbReference type="EMBL" id="X16053">
    <property type="protein sequence ID" value="CAA34187.1"/>
    <property type="molecule type" value="mRNA"/>
</dbReference>
<dbReference type="EMBL" id="X16053">
    <property type="protein sequence ID" value="CAA34188.1"/>
    <property type="molecule type" value="mRNA"/>
</dbReference>
<dbReference type="EMBL" id="U38967">
    <property type="protein sequence ID" value="AAC52490.1"/>
    <property type="molecule type" value="Genomic_DNA"/>
</dbReference>
<dbReference type="CCDS" id="CCDS30529.1">
    <molecule id="P20065-2"/>
</dbReference>
<dbReference type="PIR" id="A37217">
    <property type="entry name" value="A37217"/>
</dbReference>
<dbReference type="RefSeq" id="NP_067253.1">
    <molecule id="P20065-2"/>
    <property type="nucleotide sequence ID" value="NM_021278.3"/>
</dbReference>
<dbReference type="RefSeq" id="XP_006528822.1">
    <molecule id="P20065-2"/>
    <property type="nucleotide sequence ID" value="XM_006528759.1"/>
</dbReference>
<dbReference type="PDB" id="1T44">
    <property type="method" value="X-ray"/>
    <property type="resolution" value="2.00 A"/>
    <property type="chains" value="G=28-46"/>
</dbReference>
<dbReference type="PDB" id="3M3N">
    <property type="method" value="X-ray"/>
    <property type="resolution" value="7.00 A"/>
    <property type="chains" value="W=26-50"/>
</dbReference>
<dbReference type="PDBsum" id="1T44"/>
<dbReference type="PDBsum" id="3M3N"/>
<dbReference type="BMRB" id="P20065"/>
<dbReference type="SMR" id="P20065"/>
<dbReference type="BioGRID" id="202471">
    <property type="interactions" value="19"/>
</dbReference>
<dbReference type="CORUM" id="P20065"/>
<dbReference type="ELM" id="P20065"/>
<dbReference type="FunCoup" id="P20065">
    <property type="interactions" value="1707"/>
</dbReference>
<dbReference type="IntAct" id="P20065">
    <property type="interactions" value="3"/>
</dbReference>
<dbReference type="MINT" id="P20065"/>
<dbReference type="STRING" id="10090.ENSMUSP00000107795"/>
<dbReference type="iPTMnet" id="P20065"/>
<dbReference type="PhosphoSitePlus" id="P20065"/>
<dbReference type="jPOST" id="P20065"/>
<dbReference type="PaxDb" id="10090-ENSMUSP00000107795"/>
<dbReference type="PeptideAtlas" id="P20065"/>
<dbReference type="ProteomicsDB" id="297761">
    <molecule id="P20065-1"/>
</dbReference>
<dbReference type="ProteomicsDB" id="297762">
    <molecule id="P20065-2"/>
</dbReference>
<dbReference type="Pumba" id="P20065"/>
<dbReference type="Antibodypedia" id="8508">
    <property type="antibodies" value="265 antibodies from 28 providers"/>
</dbReference>
<dbReference type="DNASU" id="19241"/>
<dbReference type="Ensembl" id="ENSMUST00000112172.4">
    <molecule id="P20065-2"/>
    <property type="protein sequence ID" value="ENSMUSP00000107795.4"/>
    <property type="gene ID" value="ENSMUSG00000049775.17"/>
</dbReference>
<dbReference type="Ensembl" id="ENSMUST00000112175.2">
    <molecule id="P20065-1"/>
    <property type="protein sequence ID" value="ENSMUSP00000107797.2"/>
    <property type="gene ID" value="ENSMUSG00000049775.17"/>
</dbReference>
<dbReference type="Ensembl" id="ENSMUST00000112176.8">
    <molecule id="P20065-1"/>
    <property type="protein sequence ID" value="ENSMUSP00000107798.2"/>
    <property type="gene ID" value="ENSMUSG00000049775.17"/>
</dbReference>
<dbReference type="GeneID" id="19241"/>
<dbReference type="KEGG" id="mmu:19241"/>
<dbReference type="UCSC" id="uc009uwx.1">
    <molecule id="P20065-1"/>
    <property type="organism name" value="mouse"/>
</dbReference>
<dbReference type="AGR" id="MGI:99510"/>
<dbReference type="CTD" id="7114"/>
<dbReference type="MGI" id="MGI:99510">
    <property type="gene designation" value="Tmsb4x"/>
</dbReference>
<dbReference type="VEuPathDB" id="HostDB:ENSMUSG00000049775"/>
<dbReference type="eggNOG" id="KOG4794">
    <property type="taxonomic scope" value="Eukaryota"/>
</dbReference>
<dbReference type="GeneTree" id="ENSGT00940000154433"/>
<dbReference type="HOGENOM" id="CLU_208046_0_0_1"/>
<dbReference type="InParanoid" id="P20065"/>
<dbReference type="OMA" id="WLRFPSA"/>
<dbReference type="OrthoDB" id="2151618at2759"/>
<dbReference type="PhylomeDB" id="P20065"/>
<dbReference type="Reactome" id="R-MMU-114608">
    <property type="pathway name" value="Platelet degranulation"/>
</dbReference>
<dbReference type="BioGRID-ORCS" id="19241">
    <property type="hits" value="2 hits in 71 CRISPR screens"/>
</dbReference>
<dbReference type="ChiTaRS" id="Tmsb4x">
    <property type="organism name" value="mouse"/>
</dbReference>
<dbReference type="EvolutionaryTrace" id="P20065"/>
<dbReference type="PRO" id="PR:P20065"/>
<dbReference type="Proteomes" id="UP000000589">
    <property type="component" value="Chromosome X"/>
</dbReference>
<dbReference type="Bgee" id="ENSMUSG00000049775">
    <property type="expression patterns" value="Expressed in left lung lobe and 296 other cell types or tissues"/>
</dbReference>
<dbReference type="ExpressionAtlas" id="P20065">
    <property type="expression patterns" value="baseline and differential"/>
</dbReference>
<dbReference type="GO" id="GO:0005856">
    <property type="term" value="C:cytoskeleton"/>
    <property type="evidence" value="ECO:0007669"/>
    <property type="project" value="UniProtKB-SubCell"/>
</dbReference>
<dbReference type="GO" id="GO:0005829">
    <property type="term" value="C:cytosol"/>
    <property type="evidence" value="ECO:0000314"/>
    <property type="project" value="MGI"/>
</dbReference>
<dbReference type="GO" id="GO:0005634">
    <property type="term" value="C:nucleus"/>
    <property type="evidence" value="ECO:0000314"/>
    <property type="project" value="MGI"/>
</dbReference>
<dbReference type="GO" id="GO:0003785">
    <property type="term" value="F:actin monomer binding"/>
    <property type="evidence" value="ECO:0007669"/>
    <property type="project" value="InterPro"/>
</dbReference>
<dbReference type="GO" id="GO:0007015">
    <property type="term" value="P:actin filament organization"/>
    <property type="evidence" value="ECO:0007669"/>
    <property type="project" value="InterPro"/>
</dbReference>
<dbReference type="GO" id="GO:0045893">
    <property type="term" value="P:positive regulation of DNA-templated transcription"/>
    <property type="evidence" value="ECO:0000304"/>
    <property type="project" value="DFLAT"/>
</dbReference>
<dbReference type="GO" id="GO:0051152">
    <property type="term" value="P:positive regulation of smooth muscle cell differentiation"/>
    <property type="evidence" value="ECO:0000304"/>
    <property type="project" value="DFLAT"/>
</dbReference>
<dbReference type="GO" id="GO:0014911">
    <property type="term" value="P:positive regulation of smooth muscle cell migration"/>
    <property type="evidence" value="ECO:0000304"/>
    <property type="project" value="DFLAT"/>
</dbReference>
<dbReference type="GO" id="GO:0030334">
    <property type="term" value="P:regulation of cell migration"/>
    <property type="evidence" value="ECO:0000314"/>
    <property type="project" value="MGI"/>
</dbReference>
<dbReference type="CDD" id="cd22059">
    <property type="entry name" value="WH2_BetaT"/>
    <property type="match status" value="1"/>
</dbReference>
<dbReference type="FunFam" id="1.20.5.520:FF:000001">
    <property type="entry name" value="Thymosin beta"/>
    <property type="match status" value="1"/>
</dbReference>
<dbReference type="Gene3D" id="1.20.5.520">
    <property type="entry name" value="Single helix bin"/>
    <property type="match status" value="1"/>
</dbReference>
<dbReference type="InterPro" id="IPR001152">
    <property type="entry name" value="Beta-thymosin"/>
</dbReference>
<dbReference type="InterPro" id="IPR038386">
    <property type="entry name" value="Beta-thymosin_sf"/>
</dbReference>
<dbReference type="PANTHER" id="PTHR12021">
    <property type="entry name" value="THYMOSIN BETA"/>
    <property type="match status" value="1"/>
</dbReference>
<dbReference type="PANTHER" id="PTHR12021:SF20">
    <property type="entry name" value="THYMOSIN BETA-4"/>
    <property type="match status" value="1"/>
</dbReference>
<dbReference type="Pfam" id="PF01290">
    <property type="entry name" value="Thymosin"/>
    <property type="match status" value="1"/>
</dbReference>
<dbReference type="PIRSF" id="PIRSF001828">
    <property type="entry name" value="Thymosin_beta"/>
    <property type="match status" value="1"/>
</dbReference>
<dbReference type="SMART" id="SM00152">
    <property type="entry name" value="THY"/>
    <property type="match status" value="1"/>
</dbReference>
<dbReference type="PROSITE" id="PS00500">
    <property type="entry name" value="THYMOSIN_B4"/>
    <property type="match status" value="1"/>
</dbReference>
<name>TYB4_MOUSE</name>
<keyword id="KW-0002">3D-structure</keyword>
<keyword id="KW-0007">Acetylation</keyword>
<keyword id="KW-0009">Actin-binding</keyword>
<keyword id="KW-0025">Alternative splicing</keyword>
<keyword id="KW-0963">Cytoplasm</keyword>
<keyword id="KW-0206">Cytoskeleton</keyword>
<keyword id="KW-1017">Isopeptide bond</keyword>
<keyword id="KW-0597">Phosphoprotein</keyword>
<keyword id="KW-1185">Reference proteome</keyword>
<keyword id="KW-0832">Ubl conjugation</keyword>
<proteinExistence type="evidence at protein level"/>
<gene>
    <name type="primary">Tmsb4x</name>
    <name type="synonym">Ptmb4</name>
    <name type="synonym">Tmsb4</name>
</gene>
<sequence length="50" mass="5679">MLLPATMSDKPDMAEIEKFDKSKLKKTETQEKNPLPSKETIEQEKQAGES</sequence>
<organism>
    <name type="scientific">Mus musculus</name>
    <name type="common">Mouse</name>
    <dbReference type="NCBI Taxonomy" id="10090"/>
    <lineage>
        <taxon>Eukaryota</taxon>
        <taxon>Metazoa</taxon>
        <taxon>Chordata</taxon>
        <taxon>Craniata</taxon>
        <taxon>Vertebrata</taxon>
        <taxon>Euteleostomi</taxon>
        <taxon>Mammalia</taxon>
        <taxon>Eutheria</taxon>
        <taxon>Euarchontoglires</taxon>
        <taxon>Glires</taxon>
        <taxon>Rodentia</taxon>
        <taxon>Myomorpha</taxon>
        <taxon>Muroidea</taxon>
        <taxon>Muridae</taxon>
        <taxon>Murinae</taxon>
        <taxon>Mus</taxon>
        <taxon>Mus</taxon>
    </lineage>
</organism>
<reference key="1">
    <citation type="journal article" date="1990" name="J. Immunol.">
        <title>Differential splicing of thymosin beta 4 mRNA.</title>
        <authorList>
            <person name="Rudin C.M."/>
            <person name="Engler P."/>
            <person name="Storb U."/>
        </authorList>
    </citation>
    <scope>NUCLEOTIDE SEQUENCE [MRNA] (ISOFORM LONG)</scope>
    <scope>TISSUE SPECIFICITY</scope>
</reference>
<reference key="2">
    <citation type="journal article" date="1990" name="FEBS Lett.">
        <title>Depression of prothymosin alpha production in murine thymus correlates with staphylococcal enterotoxin-B-induced immunosuppression.</title>
        <authorList>
            <person name="Low T.L.K."/>
            <person name="Pan T.L."/>
            <person name="Lin Y.S."/>
        </authorList>
    </citation>
    <scope>NUCLEOTIDE SEQUENCE (ISOFORM SHORT)</scope>
</reference>
<reference key="3">
    <citation type="journal article" date="1996" name="Genomics">
        <title>The mouse thymosin beta 4 gene: structure, promoter identification, and chromosome localization.</title>
        <authorList>
            <person name="Li X."/>
            <person name="Zimmerman A."/>
            <person name="Copeland N.G."/>
            <person name="Gilbert D.J."/>
            <person name="Jenkins N.A."/>
            <person name="Yin H.L."/>
        </authorList>
    </citation>
    <scope>NUCLEOTIDE SEQUENCE [GENOMIC DNA] (ISOFORM SHORT)</scope>
    <source>
        <strain>129/Sv</strain>
    </source>
</reference>
<reference key="4">
    <citation type="journal article" date="2010" name="Cell">
        <title>A tissue-specific atlas of mouse protein phosphorylation and expression.</title>
        <authorList>
            <person name="Huttlin E.L."/>
            <person name="Jedrychowski M.P."/>
            <person name="Elias J.E."/>
            <person name="Goswami T."/>
            <person name="Rad R."/>
            <person name="Beausoleil S.A."/>
            <person name="Villen J."/>
            <person name="Haas W."/>
            <person name="Sowa M.E."/>
            <person name="Gygi S.P."/>
        </authorList>
    </citation>
    <scope>PHOSPHORYLATION [LARGE SCALE ANALYSIS] AT THR-29</scope>
    <scope>IDENTIFICATION BY MASS SPECTROMETRY [LARGE SCALE ANALYSIS]</scope>
    <source>
        <tissue>Brain</tissue>
        <tissue>Heart</tissue>
        <tissue>Kidney</tissue>
        <tissue>Lung</tissue>
        <tissue>Pancreas</tissue>
        <tissue>Spleen</tissue>
    </source>
</reference>
<reference key="5">
    <citation type="journal article" date="2001" name="J. Pharmacol. Exp. Ther.">
        <title>RXP 407, a selective inhibitor of the N-domain of angiotensin I-converting enzyme, blocks in vivo the degradation of hemoregulatory peptide acetyl-Ser-Asp-Lys-Pro with no effect on angiotensin I hydrolysis.</title>
        <authorList>
            <person name="Junot C."/>
            <person name="Gonzales M.F."/>
            <person name="Ezan E."/>
            <person name="Cotton J."/>
            <person name="Vazeux G."/>
            <person name="Michaud A."/>
            <person name="Azizi M."/>
            <person name="Vassiliou S."/>
            <person name="Yiotakis A."/>
            <person name="Corvol P."/>
            <person name="Dive V."/>
        </authorList>
    </citation>
    <scope>DEGRADATION (HEMOREGULATORY PEPTIDE ACSDKP)</scope>
</reference>
<evidence type="ECO:0000250" key="1">
    <source>
        <dbReference type="UniProtKB" id="P62326"/>
    </source>
</evidence>
<evidence type="ECO:0000250" key="2">
    <source>
        <dbReference type="UniProtKB" id="P62328"/>
    </source>
</evidence>
<evidence type="ECO:0000256" key="3">
    <source>
        <dbReference type="SAM" id="MobiDB-lite"/>
    </source>
</evidence>
<evidence type="ECO:0000269" key="4">
    <source>
    </source>
</evidence>
<evidence type="ECO:0000269" key="5">
    <source>
    </source>
</evidence>
<evidence type="ECO:0000303" key="6">
    <source>
    </source>
</evidence>
<evidence type="ECO:0000305" key="7"/>
<evidence type="ECO:0000305" key="8">
    <source>
    </source>
</evidence>
<evidence type="ECO:0007744" key="9">
    <source>
    </source>
</evidence>
<protein>
    <recommendedName>
        <fullName evidence="6">Thymosin beta-4</fullName>
        <shortName>T beta 4</shortName>
    </recommendedName>
    <component>
        <recommendedName>
            <fullName evidence="7">Hemoregulatory peptide AcSDKP</fullName>
        </recommendedName>
        <alternativeName>
            <fullName>N-acetyl-SDKP</fullName>
            <shortName>AcSDKP</shortName>
        </alternativeName>
        <alternativeName>
            <fullName evidence="2">Seraspenide</fullName>
        </alternativeName>
    </component>
</protein>
<comment type="function">
    <text evidence="2">Plays an important role in the organization of the cytoskeleton. Binds to and sequesters actin monomers (G actin) and therefore inhibits actin polymerization.</text>
</comment>
<comment type="function">
    <molecule>Hemoregulatory peptide AcSDKP</molecule>
    <text evidence="1">Potent inhibitor of bone marrow derived stem cell differentiation (By similarity). Acts by inhibits the entry of hematopoietic pluripotent stem cells into the S-phase (By similarity).</text>
</comment>
<comment type="subunit">
    <text evidence="1 2">Identified in a complex composed of ACTA1, COBL, GSN AND TMSB4X (By similarity). Interacts with SERPINB1 (By similarity).</text>
</comment>
<comment type="interaction">
    <interactant intactId="EBI-7946048">
        <id>P20065</id>
    </interactant>
    <interactant intactId="EBI-7945957">
        <id>Q8WWQ8</id>
        <label>STAB2</label>
    </interactant>
    <organismsDiffer>true</organismsDiffer>
    <experiments>3</experiments>
</comment>
<comment type="subcellular location">
    <subcellularLocation>
        <location evidence="2">Cytoplasm</location>
        <location evidence="2">Cytoskeleton</location>
    </subcellularLocation>
</comment>
<comment type="alternative products">
    <event type="alternative splicing"/>
    <isoform>
        <id>P20065-1</id>
        <name>Long</name>
        <sequence type="displayed"/>
    </isoform>
    <isoform>
        <id>P20065-2</id>
        <name>Short</name>
        <sequence type="described" ref="VSP_006424"/>
    </isoform>
</comment>
<comment type="tissue specificity">
    <text evidence="5">Originally found in thymus but it is widely distributed in many tissues.</text>
</comment>
<comment type="PTM">
    <molecule>Hemoregulatory peptide AcSDKP</molecule>
    <text evidence="4">AcSDKP is inactivated by ACE, which removes the dipeptide Lys-Pro from its C-terminus.</text>
</comment>
<comment type="similarity">
    <text evidence="7">Belongs to the thymosin beta family.</text>
</comment>
<feature type="chain" id="PRO_0000045923" description="Thymosin beta-4">
    <location>
        <begin position="1"/>
        <end position="50"/>
    </location>
</feature>
<feature type="peptide" id="PRO_0000034297" description="Hemoregulatory peptide AcSDKP" evidence="8">
    <location>
        <begin position="8"/>
        <end position="11"/>
    </location>
</feature>
<feature type="region of interest" description="Disordered" evidence="3">
    <location>
        <begin position="1"/>
        <end position="50"/>
    </location>
</feature>
<feature type="compositionally biased region" description="Basic and acidic residues" evidence="3">
    <location>
        <begin position="9"/>
        <end position="31"/>
    </location>
</feature>
<feature type="compositionally biased region" description="Basic and acidic residues" evidence="3">
    <location>
        <begin position="39"/>
        <end position="50"/>
    </location>
</feature>
<feature type="modified residue" description="Phosphoserine" evidence="2">
    <location>
        <position position="8"/>
    </location>
</feature>
<feature type="modified residue" description="N6-acetyllysine" evidence="2">
    <location>
        <position position="10"/>
    </location>
</feature>
<feature type="modified residue" description="N6-acetyllysine; alternate" evidence="2">
    <location>
        <position position="18"/>
    </location>
</feature>
<feature type="modified residue" description="Phosphothreonine" evidence="9">
    <location>
        <position position="29"/>
    </location>
</feature>
<feature type="modified residue" description="N6-acetyllysine" evidence="2">
    <location>
        <position position="32"/>
    </location>
</feature>
<feature type="modified residue" description="Phosphoserine" evidence="2">
    <location>
        <position position="37"/>
    </location>
</feature>
<feature type="modified residue" description="N6-acetyllysine" evidence="2">
    <location>
        <position position="38"/>
    </location>
</feature>
<feature type="modified residue" description="Phosphothreonine" evidence="2">
    <location>
        <position position="40"/>
    </location>
</feature>
<feature type="modified residue" description="N6-acetyllysine" evidence="2">
    <location>
        <position position="45"/>
    </location>
</feature>
<feature type="cross-link" description="Glycyl lysine isopeptide (Lys-Gly) (interchain with G-Cter in SUMO2); alternate" evidence="2">
    <location>
        <position position="18"/>
    </location>
</feature>
<feature type="splice variant" id="VSP_006424" description="In isoform Short." evidence="7">
    <location>
        <begin position="1"/>
        <end position="6"/>
    </location>
</feature>
<accession>P20065</accession>